<organism>
    <name type="scientific">Homo sapiens</name>
    <name type="common">Human</name>
    <dbReference type="NCBI Taxonomy" id="9606"/>
    <lineage>
        <taxon>Eukaryota</taxon>
        <taxon>Metazoa</taxon>
        <taxon>Chordata</taxon>
        <taxon>Craniata</taxon>
        <taxon>Vertebrata</taxon>
        <taxon>Euteleostomi</taxon>
        <taxon>Mammalia</taxon>
        <taxon>Eutheria</taxon>
        <taxon>Euarchontoglires</taxon>
        <taxon>Primates</taxon>
        <taxon>Haplorrhini</taxon>
        <taxon>Catarrhini</taxon>
        <taxon>Hominidae</taxon>
        <taxon>Homo</taxon>
    </lineage>
</organism>
<proteinExistence type="evidence at protein level"/>
<reference key="1">
    <citation type="journal article" date="2000" name="J. Biol. Chem.">
        <title>Mutations in yeast ARV1 alter intracellular sterol distribution and are complemented by human ARV1.</title>
        <authorList>
            <person name="Tinkelenberg A.H."/>
            <person name="Liu Y."/>
            <person name="Alcantara F."/>
            <person name="Khan S."/>
            <person name="Guo Z."/>
            <person name="Bard M."/>
            <person name="Sturley S.L."/>
        </authorList>
    </citation>
    <scope>NUCLEOTIDE SEQUENCE [MRNA]</scope>
    <scope>POSSIBLE FUNCTION</scope>
</reference>
<reference key="2">
    <citation type="submission" date="2000-11" db="EMBL/GenBank/DDBJ databases">
        <title>Cloning and analysis of a G1/S and G2/M phase transition related protein.</title>
        <authorList>
            <person name="He Y."/>
            <person name="Tan D."/>
            <person name="Lai J."/>
            <person name="Xie Y."/>
            <person name="Qian W."/>
            <person name="Yu M."/>
            <person name="He J."/>
        </authorList>
    </citation>
    <scope>NUCLEOTIDE SEQUENCE [MRNA]</scope>
</reference>
<reference key="3">
    <citation type="submission" date="2000-05" db="EMBL/GenBank/DDBJ databases">
        <authorList>
            <person name="Xu X."/>
            <person name="Yang Y."/>
            <person name="Gao G."/>
            <person name="Xiao H."/>
            <person name="Chen Z."/>
            <person name="Han Z."/>
        </authorList>
    </citation>
    <scope>NUCLEOTIDE SEQUENCE [LARGE SCALE MRNA]</scope>
    <source>
        <tissue>Hypothalamus</tissue>
    </source>
</reference>
<reference key="4">
    <citation type="journal article" date="2004" name="Nat. Genet.">
        <title>Complete sequencing and characterization of 21,243 full-length human cDNAs.</title>
        <authorList>
            <person name="Ota T."/>
            <person name="Suzuki Y."/>
            <person name="Nishikawa T."/>
            <person name="Otsuki T."/>
            <person name="Sugiyama T."/>
            <person name="Irie R."/>
            <person name="Wakamatsu A."/>
            <person name="Hayashi K."/>
            <person name="Sato H."/>
            <person name="Nagai K."/>
            <person name="Kimura K."/>
            <person name="Makita H."/>
            <person name="Sekine M."/>
            <person name="Obayashi M."/>
            <person name="Nishi T."/>
            <person name="Shibahara T."/>
            <person name="Tanaka T."/>
            <person name="Ishii S."/>
            <person name="Yamamoto J."/>
            <person name="Saito K."/>
            <person name="Kawai Y."/>
            <person name="Isono Y."/>
            <person name="Nakamura Y."/>
            <person name="Nagahari K."/>
            <person name="Murakami K."/>
            <person name="Yasuda T."/>
            <person name="Iwayanagi T."/>
            <person name="Wagatsuma M."/>
            <person name="Shiratori A."/>
            <person name="Sudo H."/>
            <person name="Hosoiri T."/>
            <person name="Kaku Y."/>
            <person name="Kodaira H."/>
            <person name="Kondo H."/>
            <person name="Sugawara M."/>
            <person name="Takahashi M."/>
            <person name="Kanda K."/>
            <person name="Yokoi T."/>
            <person name="Furuya T."/>
            <person name="Kikkawa E."/>
            <person name="Omura Y."/>
            <person name="Abe K."/>
            <person name="Kamihara K."/>
            <person name="Katsuta N."/>
            <person name="Sato K."/>
            <person name="Tanikawa M."/>
            <person name="Yamazaki M."/>
            <person name="Ninomiya K."/>
            <person name="Ishibashi T."/>
            <person name="Yamashita H."/>
            <person name="Murakawa K."/>
            <person name="Fujimori K."/>
            <person name="Tanai H."/>
            <person name="Kimata M."/>
            <person name="Watanabe M."/>
            <person name="Hiraoka S."/>
            <person name="Chiba Y."/>
            <person name="Ishida S."/>
            <person name="Ono Y."/>
            <person name="Takiguchi S."/>
            <person name="Watanabe S."/>
            <person name="Yosida M."/>
            <person name="Hotuta T."/>
            <person name="Kusano J."/>
            <person name="Kanehori K."/>
            <person name="Takahashi-Fujii A."/>
            <person name="Hara H."/>
            <person name="Tanase T.-O."/>
            <person name="Nomura Y."/>
            <person name="Togiya S."/>
            <person name="Komai F."/>
            <person name="Hara R."/>
            <person name="Takeuchi K."/>
            <person name="Arita M."/>
            <person name="Imose N."/>
            <person name="Musashino K."/>
            <person name="Yuuki H."/>
            <person name="Oshima A."/>
            <person name="Sasaki N."/>
            <person name="Aotsuka S."/>
            <person name="Yoshikawa Y."/>
            <person name="Matsunawa H."/>
            <person name="Ichihara T."/>
            <person name="Shiohata N."/>
            <person name="Sano S."/>
            <person name="Moriya S."/>
            <person name="Momiyama H."/>
            <person name="Satoh N."/>
            <person name="Takami S."/>
            <person name="Terashima Y."/>
            <person name="Suzuki O."/>
            <person name="Nakagawa S."/>
            <person name="Senoh A."/>
            <person name="Mizoguchi H."/>
            <person name="Goto Y."/>
            <person name="Shimizu F."/>
            <person name="Wakebe H."/>
            <person name="Hishigaki H."/>
            <person name="Watanabe T."/>
            <person name="Sugiyama A."/>
            <person name="Takemoto M."/>
            <person name="Kawakami B."/>
            <person name="Yamazaki M."/>
            <person name="Watanabe K."/>
            <person name="Kumagai A."/>
            <person name="Itakura S."/>
            <person name="Fukuzumi Y."/>
            <person name="Fujimori Y."/>
            <person name="Komiyama M."/>
            <person name="Tashiro H."/>
            <person name="Tanigami A."/>
            <person name="Fujiwara T."/>
            <person name="Ono T."/>
            <person name="Yamada K."/>
            <person name="Fujii Y."/>
            <person name="Ozaki K."/>
            <person name="Hirao M."/>
            <person name="Ohmori Y."/>
            <person name="Kawabata A."/>
            <person name="Hikiji T."/>
            <person name="Kobatake N."/>
            <person name="Inagaki H."/>
            <person name="Ikema Y."/>
            <person name="Okamoto S."/>
            <person name="Okitani R."/>
            <person name="Kawakami T."/>
            <person name="Noguchi S."/>
            <person name="Itoh T."/>
            <person name="Shigeta K."/>
            <person name="Senba T."/>
            <person name="Matsumura K."/>
            <person name="Nakajima Y."/>
            <person name="Mizuno T."/>
            <person name="Morinaga M."/>
            <person name="Sasaki M."/>
            <person name="Togashi T."/>
            <person name="Oyama M."/>
            <person name="Hata H."/>
            <person name="Watanabe M."/>
            <person name="Komatsu T."/>
            <person name="Mizushima-Sugano J."/>
            <person name="Satoh T."/>
            <person name="Shirai Y."/>
            <person name="Takahashi Y."/>
            <person name="Nakagawa K."/>
            <person name="Okumura K."/>
            <person name="Nagase T."/>
            <person name="Nomura N."/>
            <person name="Kikuchi H."/>
            <person name="Masuho Y."/>
            <person name="Yamashita R."/>
            <person name="Nakai K."/>
            <person name="Yada T."/>
            <person name="Nakamura Y."/>
            <person name="Ohara O."/>
            <person name="Isogai T."/>
            <person name="Sugano S."/>
        </authorList>
    </citation>
    <scope>NUCLEOTIDE SEQUENCE [LARGE SCALE MRNA]</scope>
    <source>
        <tissue>Uterus</tissue>
    </source>
</reference>
<reference key="5">
    <citation type="journal article" date="2006" name="Nature">
        <title>The DNA sequence and biological annotation of human chromosome 1.</title>
        <authorList>
            <person name="Gregory S.G."/>
            <person name="Barlow K.F."/>
            <person name="McLay K.E."/>
            <person name="Kaul R."/>
            <person name="Swarbreck D."/>
            <person name="Dunham A."/>
            <person name="Scott C.E."/>
            <person name="Howe K.L."/>
            <person name="Woodfine K."/>
            <person name="Spencer C.C.A."/>
            <person name="Jones M.C."/>
            <person name="Gillson C."/>
            <person name="Searle S."/>
            <person name="Zhou Y."/>
            <person name="Kokocinski F."/>
            <person name="McDonald L."/>
            <person name="Evans R."/>
            <person name="Phillips K."/>
            <person name="Atkinson A."/>
            <person name="Cooper R."/>
            <person name="Jones C."/>
            <person name="Hall R.E."/>
            <person name="Andrews T.D."/>
            <person name="Lloyd C."/>
            <person name="Ainscough R."/>
            <person name="Almeida J.P."/>
            <person name="Ambrose K.D."/>
            <person name="Anderson F."/>
            <person name="Andrew R.W."/>
            <person name="Ashwell R.I.S."/>
            <person name="Aubin K."/>
            <person name="Babbage A.K."/>
            <person name="Bagguley C.L."/>
            <person name="Bailey J."/>
            <person name="Beasley H."/>
            <person name="Bethel G."/>
            <person name="Bird C.P."/>
            <person name="Bray-Allen S."/>
            <person name="Brown J.Y."/>
            <person name="Brown A.J."/>
            <person name="Buckley D."/>
            <person name="Burton J."/>
            <person name="Bye J."/>
            <person name="Carder C."/>
            <person name="Chapman J.C."/>
            <person name="Clark S.Y."/>
            <person name="Clarke G."/>
            <person name="Clee C."/>
            <person name="Cobley V."/>
            <person name="Collier R.E."/>
            <person name="Corby N."/>
            <person name="Coville G.J."/>
            <person name="Davies J."/>
            <person name="Deadman R."/>
            <person name="Dunn M."/>
            <person name="Earthrowl M."/>
            <person name="Ellington A.G."/>
            <person name="Errington H."/>
            <person name="Frankish A."/>
            <person name="Frankland J."/>
            <person name="French L."/>
            <person name="Garner P."/>
            <person name="Garnett J."/>
            <person name="Gay L."/>
            <person name="Ghori M.R.J."/>
            <person name="Gibson R."/>
            <person name="Gilby L.M."/>
            <person name="Gillett W."/>
            <person name="Glithero R.J."/>
            <person name="Grafham D.V."/>
            <person name="Griffiths C."/>
            <person name="Griffiths-Jones S."/>
            <person name="Grocock R."/>
            <person name="Hammond S."/>
            <person name="Harrison E.S.I."/>
            <person name="Hart E."/>
            <person name="Haugen E."/>
            <person name="Heath P.D."/>
            <person name="Holmes S."/>
            <person name="Holt K."/>
            <person name="Howden P.J."/>
            <person name="Hunt A.R."/>
            <person name="Hunt S.E."/>
            <person name="Hunter G."/>
            <person name="Isherwood J."/>
            <person name="James R."/>
            <person name="Johnson C."/>
            <person name="Johnson D."/>
            <person name="Joy A."/>
            <person name="Kay M."/>
            <person name="Kershaw J.K."/>
            <person name="Kibukawa M."/>
            <person name="Kimberley A.M."/>
            <person name="King A."/>
            <person name="Knights A.J."/>
            <person name="Lad H."/>
            <person name="Laird G."/>
            <person name="Lawlor S."/>
            <person name="Leongamornlert D.A."/>
            <person name="Lloyd D.M."/>
            <person name="Loveland J."/>
            <person name="Lovell J."/>
            <person name="Lush M.J."/>
            <person name="Lyne R."/>
            <person name="Martin S."/>
            <person name="Mashreghi-Mohammadi M."/>
            <person name="Matthews L."/>
            <person name="Matthews N.S.W."/>
            <person name="McLaren S."/>
            <person name="Milne S."/>
            <person name="Mistry S."/>
            <person name="Moore M.J.F."/>
            <person name="Nickerson T."/>
            <person name="O'Dell C.N."/>
            <person name="Oliver K."/>
            <person name="Palmeiri A."/>
            <person name="Palmer S.A."/>
            <person name="Parker A."/>
            <person name="Patel D."/>
            <person name="Pearce A.V."/>
            <person name="Peck A.I."/>
            <person name="Pelan S."/>
            <person name="Phelps K."/>
            <person name="Phillimore B.J."/>
            <person name="Plumb R."/>
            <person name="Rajan J."/>
            <person name="Raymond C."/>
            <person name="Rouse G."/>
            <person name="Saenphimmachak C."/>
            <person name="Sehra H.K."/>
            <person name="Sheridan E."/>
            <person name="Shownkeen R."/>
            <person name="Sims S."/>
            <person name="Skuce C.D."/>
            <person name="Smith M."/>
            <person name="Steward C."/>
            <person name="Subramanian S."/>
            <person name="Sycamore N."/>
            <person name="Tracey A."/>
            <person name="Tromans A."/>
            <person name="Van Helmond Z."/>
            <person name="Wall M."/>
            <person name="Wallis J.M."/>
            <person name="White S."/>
            <person name="Whitehead S.L."/>
            <person name="Wilkinson J.E."/>
            <person name="Willey D.L."/>
            <person name="Williams H."/>
            <person name="Wilming L."/>
            <person name="Wray P.W."/>
            <person name="Wu Z."/>
            <person name="Coulson A."/>
            <person name="Vaudin M."/>
            <person name="Sulston J.E."/>
            <person name="Durbin R.M."/>
            <person name="Hubbard T."/>
            <person name="Wooster R."/>
            <person name="Dunham I."/>
            <person name="Carter N.P."/>
            <person name="McVean G."/>
            <person name="Ross M.T."/>
            <person name="Harrow J."/>
            <person name="Olson M.V."/>
            <person name="Beck S."/>
            <person name="Rogers J."/>
            <person name="Bentley D.R."/>
        </authorList>
    </citation>
    <scope>NUCLEOTIDE SEQUENCE [LARGE SCALE GENOMIC DNA]</scope>
</reference>
<reference key="6">
    <citation type="submission" date="2005-07" db="EMBL/GenBank/DDBJ databases">
        <authorList>
            <person name="Mural R.J."/>
            <person name="Istrail S."/>
            <person name="Sutton G.G."/>
            <person name="Florea L."/>
            <person name="Halpern A.L."/>
            <person name="Mobarry C.M."/>
            <person name="Lippert R."/>
            <person name="Walenz B."/>
            <person name="Shatkay H."/>
            <person name="Dew I."/>
            <person name="Miller J.R."/>
            <person name="Flanigan M.J."/>
            <person name="Edwards N.J."/>
            <person name="Bolanos R."/>
            <person name="Fasulo D."/>
            <person name="Halldorsson B.V."/>
            <person name="Hannenhalli S."/>
            <person name="Turner R."/>
            <person name="Yooseph S."/>
            <person name="Lu F."/>
            <person name="Nusskern D.R."/>
            <person name="Shue B.C."/>
            <person name="Zheng X.H."/>
            <person name="Zhong F."/>
            <person name="Delcher A.L."/>
            <person name="Huson D.H."/>
            <person name="Kravitz S.A."/>
            <person name="Mouchard L."/>
            <person name="Reinert K."/>
            <person name="Remington K.A."/>
            <person name="Clark A.G."/>
            <person name="Waterman M.S."/>
            <person name="Eichler E.E."/>
            <person name="Adams M.D."/>
            <person name="Hunkapiller M.W."/>
            <person name="Myers E.W."/>
            <person name="Venter J.C."/>
        </authorList>
    </citation>
    <scope>NUCLEOTIDE SEQUENCE [LARGE SCALE GENOMIC DNA]</scope>
</reference>
<reference key="7">
    <citation type="journal article" date="2004" name="Genome Res.">
        <title>The status, quality, and expansion of the NIH full-length cDNA project: the Mammalian Gene Collection (MGC).</title>
        <authorList>
            <consortium name="The MGC Project Team"/>
        </authorList>
    </citation>
    <scope>NUCLEOTIDE SEQUENCE [LARGE SCALE MRNA]</scope>
    <source>
        <tissue>Bone marrow</tissue>
    </source>
</reference>
<reference key="8">
    <citation type="journal article" date="2007" name="BMC Genomics">
        <title>The full-ORF clone resource of the German cDNA consortium.</title>
        <authorList>
            <person name="Bechtel S."/>
            <person name="Rosenfelder H."/>
            <person name="Duda A."/>
            <person name="Schmidt C.P."/>
            <person name="Ernst U."/>
            <person name="Wellenreuther R."/>
            <person name="Mehrle A."/>
            <person name="Schuster C."/>
            <person name="Bahr A."/>
            <person name="Bloecker H."/>
            <person name="Heubner D."/>
            <person name="Hoerlein A."/>
            <person name="Michel G."/>
            <person name="Wedler H."/>
            <person name="Koehrer K."/>
            <person name="Ottenwaelder B."/>
            <person name="Poustka A."/>
            <person name="Wiemann S."/>
            <person name="Schupp I."/>
        </authorList>
    </citation>
    <scope>NUCLEOTIDE SEQUENCE [LARGE SCALE MRNA] OF 192-271</scope>
    <source>
        <tissue>Testis</tissue>
    </source>
</reference>
<reference key="9">
    <citation type="journal article" date="2002" name="J. Biol. Chem.">
        <title>Yeast cells lacking the ARV1 gene harbor defects in sphingolipid metabolism. Complementation by human ARV1.</title>
        <authorList>
            <person name="Swain E."/>
            <person name="Stukey J."/>
            <person name="McDonough V."/>
            <person name="Germann M."/>
            <person name="Liu Y."/>
            <person name="Sturley S.L."/>
            <person name="Nickels J.T. Jr."/>
        </authorList>
    </citation>
    <scope>POSSIBLE FUNCTION</scope>
</reference>
<reference key="10">
    <citation type="journal article" date="2010" name="J. Biol. Chem.">
        <title>Decreased expression of ARV1 results in cholesterol retention in the endoplasmic reticulum and abnormal bile acid metabolism.</title>
        <authorList>
            <person name="Tong F."/>
            <person name="Billheimer J."/>
            <person name="Shechtman C.F."/>
            <person name="Liu Y."/>
            <person name="Crooke R."/>
            <person name="Graham M."/>
            <person name="Cohen D.E."/>
            <person name="Sturley S.L."/>
            <person name="Rader D.J."/>
        </authorList>
    </citation>
    <scope>FUNCTION</scope>
    <scope>SUBCELLULAR LOCATION</scope>
    <scope>TISSUE SPECIFICITY</scope>
</reference>
<reference key="11">
    <citation type="journal article" date="2015" name="Cell Rep.">
        <title>Accelerating novel candidate gene discovery in neurogenetic disorders via whole-exome sequencing of prescreened multiplex consanguineous families.</title>
        <authorList>
            <person name="Alazami A.M."/>
            <person name="Patel N."/>
            <person name="Shamseldin H.E."/>
            <person name="Anazi S."/>
            <person name="Al-Dosari M.S."/>
            <person name="Alzahrani F."/>
            <person name="Hijazi H."/>
            <person name="Alshammari M."/>
            <person name="Aldahmesh M.A."/>
            <person name="Salih M.A."/>
            <person name="Faqeih E."/>
            <person name="Alhashem A."/>
            <person name="Bashiri F.A."/>
            <person name="Al-Owain M."/>
            <person name="Kentab A.Y."/>
            <person name="Sogaty S."/>
            <person name="Al Tala S."/>
            <person name="Temsah M.H."/>
            <person name="Tulbah M."/>
            <person name="Aljelaify R.F."/>
            <person name="Alshahwan S.A."/>
            <person name="Seidahmed M.Z."/>
            <person name="Alhadid A.A."/>
            <person name="Aldhalaan H."/>
            <person name="Alqallaf F."/>
            <person name="Kurdi W."/>
            <person name="Alfadhel M."/>
            <person name="Babay Z."/>
            <person name="Alsogheer M."/>
            <person name="Kaya N."/>
            <person name="Al-Hassnan Z.N."/>
            <person name="Abdel-Salam G.M."/>
            <person name="Al-Sannaa N."/>
            <person name="Al Mutairi F."/>
            <person name="El Khashab H.Y."/>
            <person name="Bohlega S."/>
            <person name="Jia X."/>
            <person name="Nguyen H.C."/>
            <person name="Hammami R."/>
            <person name="Adly N."/>
            <person name="Mohamed J.Y."/>
            <person name="Abdulwahab F."/>
            <person name="Ibrahim N."/>
            <person name="Naim E.A."/>
            <person name="Al-Younes B."/>
            <person name="Meyer B.F."/>
            <person name="Hashem M."/>
            <person name="Shaheen R."/>
            <person name="Xiong Y."/>
            <person name="Abouelhoda M."/>
            <person name="Aldeeri A.A."/>
            <person name="Monies D.M."/>
            <person name="Alkuraya F.S."/>
        </authorList>
    </citation>
    <scope>VARIANT DEE38 ARG-189</scope>
    <scope>INVOLVEMENT IN DEE38</scope>
</reference>
<reference key="12">
    <citation type="journal article" date="2016" name="Hum. Mol. Genet.">
        <title>Neuronal deficiency of ARV1 causes an autosomal recessive epileptic encephalopathy.</title>
        <authorList>
            <person name="Palmer E.E."/>
            <person name="Jarrett K.E."/>
            <person name="Sachdev R.K."/>
            <person name="Al Zahrani F."/>
            <person name="Hashem M.O."/>
            <person name="Ibrahim N."/>
            <person name="Sampaio H."/>
            <person name="Kandula T."/>
            <person name="Macintosh R."/>
            <person name="Gupta R."/>
            <person name="Conlon D.M."/>
            <person name="Billheimer J.T."/>
            <person name="Rader D.J."/>
            <person name="Funato K."/>
            <person name="Walkey C.J."/>
            <person name="Lee C.S."/>
            <person name="Loo C."/>
            <person name="Brammah S."/>
            <person name="Elakis G."/>
            <person name="Zhu Y."/>
            <person name="Buckley M."/>
            <person name="Kirk E.P."/>
            <person name="Bye A."/>
            <person name="Alkuraya F.S."/>
            <person name="Roscioli T."/>
            <person name="Lagor W.R."/>
        </authorList>
    </citation>
    <scope>VARIANTS DEE38 59-LYS--ASN-98 DEL AND ARG-189</scope>
    <scope>CHARACTERIZATION OF VARIANTS DEE38 59-LYS--ASN-98 AND ARG-189</scope>
</reference>
<protein>
    <recommendedName>
        <fullName>Protein ARV1</fullName>
        <shortName>hARV1</shortName>
    </recommendedName>
</protein>
<accession>Q9H2C2</accession>
<accession>A8KAI4</accession>
<accession>Q5VSN7</accession>
<accession>Q5VSN8</accession>
<accession>Q5VSN9</accession>
<accession>Q5VSP0</accession>
<accession>Q5VSP2</accession>
<accession>Q9H2H2</accession>
<accession>Q9H5V6</accession>
<accession>Q9UFF5</accession>
<name>ARV1_HUMAN</name>
<dbReference type="EMBL" id="AF290878">
    <property type="protein sequence ID" value="AAG47671.1"/>
    <property type="molecule type" value="mRNA"/>
</dbReference>
<dbReference type="EMBL" id="AF321442">
    <property type="protein sequence ID" value="AAK11180.1"/>
    <property type="molecule type" value="mRNA"/>
</dbReference>
<dbReference type="EMBL" id="AF271780">
    <property type="protein sequence ID" value="AAG44791.1"/>
    <property type="molecule type" value="mRNA"/>
</dbReference>
<dbReference type="EMBL" id="AK026629">
    <property type="protein sequence ID" value="BAB15513.1"/>
    <property type="status" value="ALT_SEQ"/>
    <property type="molecule type" value="mRNA"/>
</dbReference>
<dbReference type="EMBL" id="AK293049">
    <property type="protein sequence ID" value="BAF85738.1"/>
    <property type="molecule type" value="mRNA"/>
</dbReference>
<dbReference type="EMBL" id="AL732414">
    <property type="status" value="NOT_ANNOTATED_CDS"/>
    <property type="molecule type" value="Genomic_DNA"/>
</dbReference>
<dbReference type="EMBL" id="AL844165">
    <property type="status" value="NOT_ANNOTATED_CDS"/>
    <property type="molecule type" value="Genomic_DNA"/>
</dbReference>
<dbReference type="EMBL" id="CH471098">
    <property type="protein sequence ID" value="EAW69935.1"/>
    <property type="molecule type" value="Genomic_DNA"/>
</dbReference>
<dbReference type="EMBL" id="BC016309">
    <property type="protein sequence ID" value="AAH16309.1"/>
    <property type="molecule type" value="mRNA"/>
</dbReference>
<dbReference type="EMBL" id="AL122047">
    <property type="protein sequence ID" value="CAB59183.3"/>
    <property type="molecule type" value="mRNA"/>
</dbReference>
<dbReference type="CCDS" id="CCDS1589.1"/>
<dbReference type="PIR" id="T34534">
    <property type="entry name" value="T34534"/>
</dbReference>
<dbReference type="RefSeq" id="NP_001333921.1">
    <property type="nucleotide sequence ID" value="NM_001346992.1"/>
</dbReference>
<dbReference type="RefSeq" id="NP_073623.1">
    <property type="nucleotide sequence ID" value="NM_022786.3"/>
</dbReference>
<dbReference type="BioGRID" id="122307">
    <property type="interactions" value="65"/>
</dbReference>
<dbReference type="FunCoup" id="Q9H2C2">
    <property type="interactions" value="2354"/>
</dbReference>
<dbReference type="IntAct" id="Q9H2C2">
    <property type="interactions" value="46"/>
</dbReference>
<dbReference type="MINT" id="Q9H2C2"/>
<dbReference type="STRING" id="9606.ENSP00000312458"/>
<dbReference type="TCDB" id="9.A.19.1.2">
    <property type="family name" value="the lipid intermediate transporter (arv1) family"/>
</dbReference>
<dbReference type="GlyGen" id="Q9H2C2">
    <property type="glycosylation" value="1 site"/>
</dbReference>
<dbReference type="iPTMnet" id="Q9H2C2"/>
<dbReference type="PhosphoSitePlus" id="Q9H2C2"/>
<dbReference type="BioMuta" id="ARV1"/>
<dbReference type="DMDM" id="74752603"/>
<dbReference type="jPOST" id="Q9H2C2"/>
<dbReference type="MassIVE" id="Q9H2C2"/>
<dbReference type="PaxDb" id="9606-ENSP00000312458"/>
<dbReference type="PeptideAtlas" id="Q9H2C2"/>
<dbReference type="ProteomicsDB" id="80527"/>
<dbReference type="Pumba" id="Q9H2C2"/>
<dbReference type="Antibodypedia" id="34681">
    <property type="antibodies" value="96 antibodies from 20 providers"/>
</dbReference>
<dbReference type="DNASU" id="64801"/>
<dbReference type="Ensembl" id="ENST00000310256.7">
    <property type="protein sequence ID" value="ENSP00000312458.2"/>
    <property type="gene ID" value="ENSG00000173409.14"/>
</dbReference>
<dbReference type="GeneID" id="64801"/>
<dbReference type="KEGG" id="hsa:64801"/>
<dbReference type="MANE-Select" id="ENST00000310256.7">
    <property type="protein sequence ID" value="ENSP00000312458.2"/>
    <property type="RefSeq nucleotide sequence ID" value="NM_022786.3"/>
    <property type="RefSeq protein sequence ID" value="NP_073623.1"/>
</dbReference>
<dbReference type="UCSC" id="uc001huh.4">
    <property type="organism name" value="human"/>
</dbReference>
<dbReference type="AGR" id="HGNC:29561"/>
<dbReference type="CTD" id="64801"/>
<dbReference type="DisGeNET" id="64801"/>
<dbReference type="GeneCards" id="ARV1"/>
<dbReference type="HGNC" id="HGNC:29561">
    <property type="gene designation" value="ARV1"/>
</dbReference>
<dbReference type="HPA" id="ENSG00000173409">
    <property type="expression patterns" value="Low tissue specificity"/>
</dbReference>
<dbReference type="MalaCards" id="ARV1"/>
<dbReference type="MIM" id="611647">
    <property type="type" value="gene"/>
</dbReference>
<dbReference type="MIM" id="617020">
    <property type="type" value="phenotype"/>
</dbReference>
<dbReference type="neXtProt" id="NX_Q9H2C2"/>
<dbReference type="OpenTargets" id="ENSG00000173409"/>
<dbReference type="PharmGKB" id="PA134935092"/>
<dbReference type="VEuPathDB" id="HostDB:ENSG00000173409"/>
<dbReference type="eggNOG" id="KOG3134">
    <property type="taxonomic scope" value="Eukaryota"/>
</dbReference>
<dbReference type="GeneTree" id="ENSGT00390000002675"/>
<dbReference type="InParanoid" id="Q9H2C2"/>
<dbReference type="OMA" id="MLDMNVK"/>
<dbReference type="OrthoDB" id="2192830at2759"/>
<dbReference type="PAN-GO" id="Q9H2C2">
    <property type="GO annotations" value="6 GO annotations based on evolutionary models"/>
</dbReference>
<dbReference type="PhylomeDB" id="Q9H2C2"/>
<dbReference type="TreeFam" id="TF105845"/>
<dbReference type="PathwayCommons" id="Q9H2C2"/>
<dbReference type="Reactome" id="R-HSA-191273">
    <property type="pathway name" value="Cholesterol biosynthesis"/>
</dbReference>
<dbReference type="SignaLink" id="Q9H2C2"/>
<dbReference type="BioGRID-ORCS" id="64801">
    <property type="hits" value="15 hits in 1154 CRISPR screens"/>
</dbReference>
<dbReference type="ChiTaRS" id="ARV1">
    <property type="organism name" value="human"/>
</dbReference>
<dbReference type="GenomeRNAi" id="64801"/>
<dbReference type="Pharos" id="Q9H2C2">
    <property type="development level" value="Tbio"/>
</dbReference>
<dbReference type="PRO" id="PR:Q9H2C2"/>
<dbReference type="Proteomes" id="UP000005640">
    <property type="component" value="Chromosome 1"/>
</dbReference>
<dbReference type="RNAct" id="Q9H2C2">
    <property type="molecule type" value="protein"/>
</dbReference>
<dbReference type="Bgee" id="ENSG00000173409">
    <property type="expression patterns" value="Expressed in cardiac muscle of right atrium and 192 other cell types or tissues"/>
</dbReference>
<dbReference type="ExpressionAtlas" id="Q9H2C2">
    <property type="expression patterns" value="baseline and differential"/>
</dbReference>
<dbReference type="GO" id="GO:0032541">
    <property type="term" value="C:cortical endoplasmic reticulum"/>
    <property type="evidence" value="ECO:0000318"/>
    <property type="project" value="GO_Central"/>
</dbReference>
<dbReference type="GO" id="GO:0005789">
    <property type="term" value="C:endoplasmic reticulum membrane"/>
    <property type="evidence" value="ECO:0000314"/>
    <property type="project" value="UniProtKB"/>
</dbReference>
<dbReference type="GO" id="GO:0005794">
    <property type="term" value="C:Golgi apparatus"/>
    <property type="evidence" value="ECO:0000318"/>
    <property type="project" value="GO_Central"/>
</dbReference>
<dbReference type="GO" id="GO:0120015">
    <property type="term" value="F:sterol transfer activity"/>
    <property type="evidence" value="ECO:0000304"/>
    <property type="project" value="Reactome"/>
</dbReference>
<dbReference type="GO" id="GO:0008206">
    <property type="term" value="P:bile acid metabolic process"/>
    <property type="evidence" value="ECO:0007669"/>
    <property type="project" value="Ensembl"/>
</dbReference>
<dbReference type="GO" id="GO:0006695">
    <property type="term" value="P:cholesterol biosynthetic process"/>
    <property type="evidence" value="ECO:0000304"/>
    <property type="project" value="Reactome"/>
</dbReference>
<dbReference type="GO" id="GO:0030301">
    <property type="term" value="P:cholesterol transport"/>
    <property type="evidence" value="ECO:0000314"/>
    <property type="project" value="MGI"/>
</dbReference>
<dbReference type="GO" id="GO:0032366">
    <property type="term" value="P:intracellular sterol transport"/>
    <property type="evidence" value="ECO:0000318"/>
    <property type="project" value="GO_Central"/>
</dbReference>
<dbReference type="GO" id="GO:0090181">
    <property type="term" value="P:regulation of cholesterol metabolic process"/>
    <property type="evidence" value="ECO:0000315"/>
    <property type="project" value="UniProtKB"/>
</dbReference>
<dbReference type="GO" id="GO:0032383">
    <property type="term" value="P:regulation of intracellular cholesterol transport"/>
    <property type="evidence" value="ECO:0000315"/>
    <property type="project" value="UniProtKB"/>
</dbReference>
<dbReference type="GO" id="GO:0097036">
    <property type="term" value="P:regulation of plasma membrane sterol distribution"/>
    <property type="evidence" value="ECO:0000318"/>
    <property type="project" value="GO_Central"/>
</dbReference>
<dbReference type="GO" id="GO:0006665">
    <property type="term" value="P:sphingolipid metabolic process"/>
    <property type="evidence" value="ECO:0000318"/>
    <property type="project" value="GO_Central"/>
</dbReference>
<dbReference type="GO" id="GO:0016125">
    <property type="term" value="P:sterol metabolic process"/>
    <property type="evidence" value="ECO:0000318"/>
    <property type="project" value="GO_Central"/>
</dbReference>
<dbReference type="InterPro" id="IPR007290">
    <property type="entry name" value="Arv1"/>
</dbReference>
<dbReference type="PANTHER" id="PTHR14467">
    <property type="entry name" value="ARV1"/>
    <property type="match status" value="1"/>
</dbReference>
<dbReference type="PANTHER" id="PTHR14467:SF0">
    <property type="entry name" value="PROTEIN ARV1"/>
    <property type="match status" value="1"/>
</dbReference>
<dbReference type="Pfam" id="PF04161">
    <property type="entry name" value="Arv1"/>
    <property type="match status" value="1"/>
</dbReference>
<gene>
    <name type="primary">ARV1</name>
    <name type="ORF">HT035</name>
</gene>
<comment type="function">
    <text evidence="2 3 4">Plays a role as a mediator in the endoplasmic reticulum (ER) cholesterol and bile acid homeostasis (PubMed:11063737, PubMed:12145310, PubMed:20663892). Participates in sterol transport out of the ER and distribution into plasma membranes (PubMed:20663892).</text>
</comment>
<comment type="interaction">
    <interactant intactId="EBI-11724186">
        <id>Q9H2C2</id>
    </interactant>
    <interactant intactId="EBI-13059134">
        <id>Q13520</id>
        <label>AQP6</label>
    </interactant>
    <organismsDiffer>false</organismsDiffer>
    <experiments>3</experiments>
</comment>
<comment type="interaction">
    <interactant intactId="EBI-11724186">
        <id>Q9H2C2</id>
    </interactant>
    <interactant intactId="EBI-6942903">
        <id>Q96BA8</id>
        <label>CREB3L1</label>
    </interactant>
    <organismsDiffer>false</organismsDiffer>
    <experiments>3</experiments>
</comment>
<comment type="interaction">
    <interactant intactId="EBI-11724186">
        <id>Q9H2C2</id>
    </interactant>
    <interactant intactId="EBI-3915253">
        <id>Q15125</id>
        <label>EBP</label>
    </interactant>
    <organismsDiffer>false</organismsDiffer>
    <experiments>3</experiments>
</comment>
<comment type="interaction">
    <interactant intactId="EBI-11724186">
        <id>Q9H2C2</id>
    </interactant>
    <interactant intactId="EBI-18304435">
        <id>Q5JX71</id>
        <label>FAM209A</label>
    </interactant>
    <organismsDiffer>false</organismsDiffer>
    <experiments>3</experiments>
</comment>
<comment type="interaction">
    <interactant intactId="EBI-11724186">
        <id>Q9H2C2</id>
    </interactant>
    <interactant intactId="EBI-13345167">
        <id>Q8TDT2</id>
        <label>GPR152</label>
    </interactant>
    <organismsDiffer>false</organismsDiffer>
    <experiments>3</experiments>
</comment>
<comment type="interaction">
    <interactant intactId="EBI-11724186">
        <id>Q9H2C2</id>
    </interactant>
    <interactant intactId="EBI-17263240">
        <id>P15941-11</id>
        <label>MUC1</label>
    </interactant>
    <organismsDiffer>false</organismsDiffer>
    <experiments>3</experiments>
</comment>
<comment type="interaction">
    <interactant intactId="EBI-11724186">
        <id>Q9H2C2</id>
    </interactant>
    <interactant intactId="EBI-18397230">
        <id>Q6P5S7</id>
        <label>RNASEK</label>
    </interactant>
    <organismsDiffer>false</organismsDiffer>
    <experiments>3</experiments>
</comment>
<comment type="interaction">
    <interactant intactId="EBI-11724186">
        <id>Q9H2C2</id>
    </interactant>
    <interactant intactId="EBI-17247926">
        <id>Q9NY72</id>
        <label>SCN3B</label>
    </interactant>
    <organismsDiffer>false</organismsDiffer>
    <experiments>5</experiments>
</comment>
<comment type="interaction">
    <interactant intactId="EBI-11724186">
        <id>Q9H2C2</id>
    </interactant>
    <interactant intactId="EBI-18159983">
        <id>Q3KNW5</id>
        <label>SLC10A6</label>
    </interactant>
    <organismsDiffer>false</organismsDiffer>
    <experiments>3</experiments>
</comment>
<comment type="interaction">
    <interactant intactId="EBI-11724186">
        <id>Q9H2C2</id>
    </interactant>
    <interactant intactId="EBI-12947623">
        <id>Q96MV1</id>
        <label>TLCD4</label>
    </interactant>
    <organismsDiffer>false</organismsDiffer>
    <experiments>3</experiments>
</comment>
<comment type="interaction">
    <interactant intactId="EBI-11724186">
        <id>Q9H2C2</id>
    </interactant>
    <interactant intactId="EBI-8638294">
        <id>Q9NUH8</id>
        <label>TMEM14B</label>
    </interactant>
    <organismsDiffer>false</organismsDiffer>
    <experiments>3</experiments>
</comment>
<comment type="interaction">
    <interactant intactId="EBI-11724186">
        <id>Q9H2C2</id>
    </interactant>
    <interactant intactId="EBI-6447886">
        <id>Q9Y320</id>
        <label>TMX2</label>
    </interactant>
    <organismsDiffer>false</organismsDiffer>
    <experiments>3</experiments>
</comment>
<comment type="subcellular location">
    <subcellularLocation>
        <location evidence="4">Endoplasmic reticulum membrane</location>
        <topology evidence="7">Multi-pass membrane protein</topology>
    </subcellularLocation>
</comment>
<comment type="tissue specificity">
    <text evidence="4">Ubiquitous. Highly expressed in liver and adipose.</text>
</comment>
<comment type="disease" evidence="5 6">
    <disease id="DI-04755">
        <name>Developmental and epileptic encephalopathy 38</name>
        <acronym>DEE38</acronym>
        <description>A form of epileptic encephalopathy, a heterogeneous group of severe early-onset epilepsies characterized by refractory seizures, neurodevelopmental impairment, and poor prognosis. Development is normal prior to seizure onset, after which cognitive and motor delays become apparent. DEE38 inheritance is autosomal recessive.</description>
        <dbReference type="MIM" id="617020"/>
    </disease>
    <text>The disease is caused by variants affecting the gene represented in this entry.</text>
</comment>
<comment type="miscellaneous">
    <text evidence="2 3">When transfected in S.cerevisiae, it can complement the absence of yeast of ARV1 protein, suggesting a conserved role in sphingolipid metabolism.</text>
</comment>
<comment type="similarity">
    <text evidence="7">Belongs to the ARV1 family.</text>
</comment>
<comment type="sequence caution" evidence="7">
    <conflict type="miscellaneous discrepancy">
        <sequence resource="EMBL-CDS" id="BAB15513"/>
    </conflict>
    <text>Contaminating sequence. Potential poly-A sequence.</text>
</comment>
<sequence>MGNGGRSGLQQGKGNVDGVAATPTAASASCQYRCIECNQEAKELYRDYNHGVLKITICKSCQKPVDKYIEYDPVIILINAILCKAQAYRHILFNTQINIHGKLCIFCLLCEAYLRWWQLQDSNQNTAPDDLIRYAKEWDFYRMFAIAALEQTAYFIGIFTFLWVERPMTAKKKPNFILLLKALLLSSYGKLLLIPAVIWEHDYTSVCLKLIKVFVLTSNFQAIRVTLNINRKLSFLAVLSGLLLESIMVYFFQSMEWDVGSDYAIFKSQDF</sequence>
<evidence type="ECO:0000255" key="1"/>
<evidence type="ECO:0000269" key="2">
    <source>
    </source>
</evidence>
<evidence type="ECO:0000269" key="3">
    <source>
    </source>
</evidence>
<evidence type="ECO:0000269" key="4">
    <source>
    </source>
</evidence>
<evidence type="ECO:0000269" key="5">
    <source>
    </source>
</evidence>
<evidence type="ECO:0000269" key="6">
    <source>
    </source>
</evidence>
<evidence type="ECO:0000305" key="7"/>
<feature type="chain" id="PRO_0000228659" description="Protein ARV1">
    <location>
        <begin position="1"/>
        <end position="271"/>
    </location>
</feature>
<feature type="transmembrane region" description="Helical" evidence="1">
    <location>
        <begin position="144"/>
        <end position="164"/>
    </location>
</feature>
<feature type="transmembrane region" description="Helical" evidence="1">
    <location>
        <begin position="176"/>
        <end position="196"/>
    </location>
</feature>
<feature type="transmembrane region" description="Helical" evidence="1">
    <location>
        <begin position="233"/>
        <end position="253"/>
    </location>
</feature>
<feature type="sequence variant" id="VAR_077050" description="In DEE38; loss of protein stability; yeast complementation assays show that the variant does not rescue cell growth." evidence="6">
    <location>
        <begin position="59"/>
        <end position="98"/>
    </location>
</feature>
<feature type="sequence variant" id="VAR_033525" description="In dbSNP:rs35764859.">
    <original>G</original>
    <variation>E</variation>
    <location>
        <position position="101"/>
    </location>
</feature>
<feature type="sequence variant" id="VAR_077051" description="In DEE38; loss of protein stability; yeast complementation assays show that the variant does partially rescue cell growth; dbSNP:rs730882241." evidence="5 6">
    <original>G</original>
    <variation>R</variation>
    <location>
        <position position="189"/>
    </location>
</feature>
<feature type="sequence conflict" description="In Ref. 4; BAB15513." evidence="7" ref="4">
    <original>AK</original>
    <variation>VR</variation>
    <location>
        <begin position="135"/>
        <end position="136"/>
    </location>
</feature>
<feature type="sequence conflict" description="In Ref. 2; AAG44791." evidence="7" ref="2">
    <original>A</original>
    <variation>D</variation>
    <location>
        <position position="182"/>
    </location>
</feature>
<keyword id="KW-0153">Cholesterol metabolism</keyword>
<keyword id="KW-0225">Disease variant</keyword>
<keyword id="KW-0256">Endoplasmic reticulum</keyword>
<keyword id="KW-0887">Epilepsy</keyword>
<keyword id="KW-0443">Lipid metabolism</keyword>
<keyword id="KW-0445">Lipid transport</keyword>
<keyword id="KW-0472">Membrane</keyword>
<keyword id="KW-1267">Proteomics identification</keyword>
<keyword id="KW-1185">Reference proteome</keyword>
<keyword id="KW-0753">Steroid metabolism</keyword>
<keyword id="KW-1207">Sterol metabolism</keyword>
<keyword id="KW-0812">Transmembrane</keyword>
<keyword id="KW-1133">Transmembrane helix</keyword>
<keyword id="KW-0813">Transport</keyword>